<organism>
    <name type="scientific">Lactococcus lactis subsp. lactis (strain IL1403)</name>
    <name type="common">Streptococcus lactis</name>
    <dbReference type="NCBI Taxonomy" id="272623"/>
    <lineage>
        <taxon>Bacteria</taxon>
        <taxon>Bacillati</taxon>
        <taxon>Bacillota</taxon>
        <taxon>Bacilli</taxon>
        <taxon>Lactobacillales</taxon>
        <taxon>Streptococcaceae</taxon>
        <taxon>Lactococcus</taxon>
    </lineage>
</organism>
<proteinExistence type="inferred from homology"/>
<reference key="1">
    <citation type="journal article" date="2001" name="Genome Res.">
        <title>The complete genome sequence of the lactic acid bacterium Lactococcus lactis ssp. lactis IL1403.</title>
        <authorList>
            <person name="Bolotin A."/>
            <person name="Wincker P."/>
            <person name="Mauger S."/>
            <person name="Jaillon O."/>
            <person name="Malarme K."/>
            <person name="Weissenbach J."/>
            <person name="Ehrlich S.D."/>
            <person name="Sorokin A."/>
        </authorList>
    </citation>
    <scope>NUCLEOTIDE SEQUENCE [LARGE SCALE GENOMIC DNA]</scope>
    <source>
        <strain>IL1403</strain>
    </source>
</reference>
<keyword id="KW-0963">Cytoplasm</keyword>
<keyword id="KW-0396">Initiation factor</keyword>
<keyword id="KW-0648">Protein biosynthesis</keyword>
<keyword id="KW-1185">Reference proteome</keyword>
<dbReference type="EMBL" id="AE005176">
    <property type="protein sequence ID" value="AAK05942.1"/>
    <property type="status" value="ALT_INIT"/>
    <property type="molecule type" value="Genomic_DNA"/>
</dbReference>
<dbReference type="PIR" id="D86855">
    <property type="entry name" value="D86855"/>
</dbReference>
<dbReference type="RefSeq" id="NP_268001.1">
    <property type="nucleotide sequence ID" value="NC_002662.1"/>
</dbReference>
<dbReference type="SMR" id="Q9CEJ7"/>
<dbReference type="PaxDb" id="272623-L95240"/>
<dbReference type="EnsemblBacteria" id="AAK05942">
    <property type="protein sequence ID" value="AAK05942"/>
    <property type="gene ID" value="L95240"/>
</dbReference>
<dbReference type="KEGG" id="lla:L95240"/>
<dbReference type="PATRIC" id="fig|272623.7.peg.1975"/>
<dbReference type="eggNOG" id="COG0290">
    <property type="taxonomic scope" value="Bacteria"/>
</dbReference>
<dbReference type="HOGENOM" id="CLU_054919_3_2_9"/>
<dbReference type="OrthoDB" id="9806014at2"/>
<dbReference type="Proteomes" id="UP000002196">
    <property type="component" value="Chromosome"/>
</dbReference>
<dbReference type="GO" id="GO:0005829">
    <property type="term" value="C:cytosol"/>
    <property type="evidence" value="ECO:0007669"/>
    <property type="project" value="TreeGrafter"/>
</dbReference>
<dbReference type="GO" id="GO:0016020">
    <property type="term" value="C:membrane"/>
    <property type="evidence" value="ECO:0007669"/>
    <property type="project" value="TreeGrafter"/>
</dbReference>
<dbReference type="GO" id="GO:0043022">
    <property type="term" value="F:ribosome binding"/>
    <property type="evidence" value="ECO:0007669"/>
    <property type="project" value="TreeGrafter"/>
</dbReference>
<dbReference type="GO" id="GO:0003743">
    <property type="term" value="F:translation initiation factor activity"/>
    <property type="evidence" value="ECO:0007669"/>
    <property type="project" value="UniProtKB-UniRule"/>
</dbReference>
<dbReference type="GO" id="GO:0032790">
    <property type="term" value="P:ribosome disassembly"/>
    <property type="evidence" value="ECO:0007669"/>
    <property type="project" value="TreeGrafter"/>
</dbReference>
<dbReference type="FunFam" id="3.10.20.80:FF:000001">
    <property type="entry name" value="Translation initiation factor IF-3"/>
    <property type="match status" value="1"/>
</dbReference>
<dbReference type="FunFam" id="3.30.110.10:FF:000001">
    <property type="entry name" value="Translation initiation factor IF-3"/>
    <property type="match status" value="1"/>
</dbReference>
<dbReference type="Gene3D" id="3.30.110.10">
    <property type="entry name" value="Translation initiation factor 3 (IF-3), C-terminal domain"/>
    <property type="match status" value="1"/>
</dbReference>
<dbReference type="Gene3D" id="3.10.20.80">
    <property type="entry name" value="Translation initiation factor 3 (IF-3), N-terminal domain"/>
    <property type="match status" value="1"/>
</dbReference>
<dbReference type="HAMAP" id="MF_00080">
    <property type="entry name" value="IF_3"/>
    <property type="match status" value="1"/>
</dbReference>
<dbReference type="InterPro" id="IPR036788">
    <property type="entry name" value="T_IF-3_C_sf"/>
</dbReference>
<dbReference type="InterPro" id="IPR036787">
    <property type="entry name" value="T_IF-3_N_sf"/>
</dbReference>
<dbReference type="InterPro" id="IPR019813">
    <property type="entry name" value="Translation_initiation_fac3_CS"/>
</dbReference>
<dbReference type="InterPro" id="IPR001288">
    <property type="entry name" value="Translation_initiation_fac_3"/>
</dbReference>
<dbReference type="InterPro" id="IPR019815">
    <property type="entry name" value="Translation_initiation_fac_3_C"/>
</dbReference>
<dbReference type="InterPro" id="IPR019814">
    <property type="entry name" value="Translation_initiation_fac_3_N"/>
</dbReference>
<dbReference type="NCBIfam" id="TIGR00168">
    <property type="entry name" value="infC"/>
    <property type="match status" value="1"/>
</dbReference>
<dbReference type="PANTHER" id="PTHR10938">
    <property type="entry name" value="TRANSLATION INITIATION FACTOR IF-3"/>
    <property type="match status" value="1"/>
</dbReference>
<dbReference type="PANTHER" id="PTHR10938:SF0">
    <property type="entry name" value="TRANSLATION INITIATION FACTOR IF-3, MITOCHONDRIAL"/>
    <property type="match status" value="1"/>
</dbReference>
<dbReference type="Pfam" id="PF00707">
    <property type="entry name" value="IF3_C"/>
    <property type="match status" value="1"/>
</dbReference>
<dbReference type="Pfam" id="PF05198">
    <property type="entry name" value="IF3_N"/>
    <property type="match status" value="1"/>
</dbReference>
<dbReference type="SUPFAM" id="SSF55200">
    <property type="entry name" value="Translation initiation factor IF3, C-terminal domain"/>
    <property type="match status" value="1"/>
</dbReference>
<dbReference type="SUPFAM" id="SSF54364">
    <property type="entry name" value="Translation initiation factor IF3, N-terminal domain"/>
    <property type="match status" value="1"/>
</dbReference>
<dbReference type="PROSITE" id="PS00938">
    <property type="entry name" value="IF3"/>
    <property type="match status" value="1"/>
</dbReference>
<evidence type="ECO:0000255" key="1">
    <source>
        <dbReference type="HAMAP-Rule" id="MF_00080"/>
    </source>
</evidence>
<evidence type="ECO:0000305" key="2"/>
<name>IF3_LACLA</name>
<sequence length="179" mass="20558">MRRRTNIAKQDNRKPMMNGAIRAREVRLIGAEGEQLGVTPTSEALMQAENLNMDLVLISNQEPPVAKIMDYTKFMFEQKKKQKEAKKKQAVVSVKEVRLSPVIDQNDFDTKLRQAIKFLEKGDKVKVSIRFKGRMITHQDVGRQVMDKFAQATKEVAVVEQRAKMDGRQMFLQLAPIKK</sequence>
<comment type="function">
    <text evidence="1">IF-3 binds to the 30S ribosomal subunit and shifts the equilibrium between 70S ribosomes and their 50S and 30S subunits in favor of the free subunits, thus enhancing the availability of 30S subunits on which protein synthesis initiation begins.</text>
</comment>
<comment type="subunit">
    <text evidence="1">Monomer.</text>
</comment>
<comment type="subcellular location">
    <subcellularLocation>
        <location evidence="1">Cytoplasm</location>
    </subcellularLocation>
</comment>
<comment type="similarity">
    <text evidence="1">Belongs to the IF-3 family.</text>
</comment>
<comment type="sequence caution" evidence="2">
    <conflict type="erroneous initiation">
        <sequence resource="EMBL-CDS" id="AAK05942"/>
    </conflict>
</comment>
<protein>
    <recommendedName>
        <fullName evidence="1">Translation initiation factor IF-3</fullName>
    </recommendedName>
</protein>
<gene>
    <name evidence="1" type="primary">infC</name>
    <name type="ordered locus">LL1844</name>
    <name type="ORF">L95240</name>
</gene>
<accession>Q9CEJ7</accession>
<feature type="chain" id="PRO_0000177530" description="Translation initiation factor IF-3">
    <location>
        <begin position="1"/>
        <end position="179"/>
    </location>
</feature>